<sequence>MTAPFVLAVPSKGRLQENAEAFFARAGLALSKPGGARDYRGTIAGLDNVEVAYLSASEIAANLARGSVHFGVTGEDLLRESIADADRRVLLIDGLGFGYANVVVAVPQAWIDVRTMADLDDVTTGFRAQHNRRMRVATKYINLTRGFFAQHNVVDYRIVESAGATEGAPAVGTAEMIVDITTTGATLAANGLKVLDDGIMLRSQANLVASRDADWSDEVRETARVILDQIASRARASKYKEVRTRFAGCNEALLAEAHKRFGVVSPFGGPTSSGMLTLHCPPAQIYGLGSFLREHGADTVSVASLDYVFDKDNPLFSKLAAFLRQ</sequence>
<organism>
    <name type="scientific">Rhodopseudomonas palustris (strain HaA2)</name>
    <dbReference type="NCBI Taxonomy" id="316058"/>
    <lineage>
        <taxon>Bacteria</taxon>
        <taxon>Pseudomonadati</taxon>
        <taxon>Pseudomonadota</taxon>
        <taxon>Alphaproteobacteria</taxon>
        <taxon>Hyphomicrobiales</taxon>
        <taxon>Nitrobacteraceae</taxon>
        <taxon>Rhodopseudomonas</taxon>
    </lineage>
</organism>
<comment type="function">
    <text evidence="1">Catalyzes the condensation of ATP and 5-phosphoribose 1-diphosphate to form N'-(5'-phosphoribosyl)-ATP (PR-ATP). Has a crucial role in the pathway because the rate of histidine biosynthesis seems to be controlled primarily by regulation of HisG enzymatic activity.</text>
</comment>
<comment type="catalytic activity">
    <reaction evidence="1">
        <text>1-(5-phospho-beta-D-ribosyl)-ATP + diphosphate = 5-phospho-alpha-D-ribose 1-diphosphate + ATP</text>
        <dbReference type="Rhea" id="RHEA:18473"/>
        <dbReference type="ChEBI" id="CHEBI:30616"/>
        <dbReference type="ChEBI" id="CHEBI:33019"/>
        <dbReference type="ChEBI" id="CHEBI:58017"/>
        <dbReference type="ChEBI" id="CHEBI:73183"/>
        <dbReference type="EC" id="2.4.2.17"/>
    </reaction>
</comment>
<comment type="cofactor">
    <cofactor evidence="1">
        <name>Mg(2+)</name>
        <dbReference type="ChEBI" id="CHEBI:18420"/>
    </cofactor>
</comment>
<comment type="activity regulation">
    <text evidence="1">Feedback inhibited by histidine.</text>
</comment>
<comment type="pathway">
    <text evidence="1">Amino-acid biosynthesis; L-histidine biosynthesis; L-histidine from 5-phospho-alpha-D-ribose 1-diphosphate: step 1/9.</text>
</comment>
<comment type="subcellular location">
    <subcellularLocation>
        <location evidence="1">Cytoplasm</location>
    </subcellularLocation>
</comment>
<comment type="similarity">
    <text evidence="1">Belongs to the ATP phosphoribosyltransferase family. Long subfamily.</text>
</comment>
<proteinExistence type="inferred from homology"/>
<evidence type="ECO:0000255" key="1">
    <source>
        <dbReference type="HAMAP-Rule" id="MF_00079"/>
    </source>
</evidence>
<keyword id="KW-0028">Amino-acid biosynthesis</keyword>
<keyword id="KW-0067">ATP-binding</keyword>
<keyword id="KW-0963">Cytoplasm</keyword>
<keyword id="KW-0328">Glycosyltransferase</keyword>
<keyword id="KW-0368">Histidine biosynthesis</keyword>
<keyword id="KW-0460">Magnesium</keyword>
<keyword id="KW-0479">Metal-binding</keyword>
<keyword id="KW-0547">Nucleotide-binding</keyword>
<keyword id="KW-1185">Reference proteome</keyword>
<keyword id="KW-0808">Transferase</keyword>
<accession>Q2IZ07</accession>
<reference key="1">
    <citation type="submission" date="2006-01" db="EMBL/GenBank/DDBJ databases">
        <title>Complete sequence of Rhodopseudomonas palustris HaA2.</title>
        <authorList>
            <consortium name="US DOE Joint Genome Institute"/>
            <person name="Copeland A."/>
            <person name="Lucas S."/>
            <person name="Lapidus A."/>
            <person name="Barry K."/>
            <person name="Detter J.C."/>
            <person name="Glavina T."/>
            <person name="Hammon N."/>
            <person name="Israni S."/>
            <person name="Pitluck S."/>
            <person name="Chain P."/>
            <person name="Malfatti S."/>
            <person name="Shin M."/>
            <person name="Vergez L."/>
            <person name="Schmutz J."/>
            <person name="Larimer F."/>
            <person name="Land M."/>
            <person name="Hauser L."/>
            <person name="Pelletier D.A."/>
            <person name="Kyrpides N."/>
            <person name="Anderson I."/>
            <person name="Oda Y."/>
            <person name="Harwood C.S."/>
            <person name="Richardson P."/>
        </authorList>
    </citation>
    <scope>NUCLEOTIDE SEQUENCE [LARGE SCALE GENOMIC DNA]</scope>
    <source>
        <strain>HaA2</strain>
    </source>
</reference>
<feature type="chain" id="PRO_1000004490" description="ATP phosphoribosyltransferase">
    <location>
        <begin position="1"/>
        <end position="325"/>
    </location>
</feature>
<name>HIS1_RHOP2</name>
<dbReference type="EC" id="2.4.2.17" evidence="1"/>
<dbReference type="EMBL" id="CP000250">
    <property type="protein sequence ID" value="ABD06553.1"/>
    <property type="molecule type" value="Genomic_DNA"/>
</dbReference>
<dbReference type="RefSeq" id="WP_011440741.1">
    <property type="nucleotide sequence ID" value="NC_007778.1"/>
</dbReference>
<dbReference type="SMR" id="Q2IZ07"/>
<dbReference type="STRING" id="316058.RPB_1845"/>
<dbReference type="KEGG" id="rpb:RPB_1845"/>
<dbReference type="eggNOG" id="COG0040">
    <property type="taxonomic scope" value="Bacteria"/>
</dbReference>
<dbReference type="HOGENOM" id="CLU_038115_0_1_5"/>
<dbReference type="OrthoDB" id="9806435at2"/>
<dbReference type="UniPathway" id="UPA00031">
    <property type="reaction ID" value="UER00006"/>
</dbReference>
<dbReference type="Proteomes" id="UP000008809">
    <property type="component" value="Chromosome"/>
</dbReference>
<dbReference type="GO" id="GO:0005737">
    <property type="term" value="C:cytoplasm"/>
    <property type="evidence" value="ECO:0007669"/>
    <property type="project" value="UniProtKB-SubCell"/>
</dbReference>
<dbReference type="GO" id="GO:0005524">
    <property type="term" value="F:ATP binding"/>
    <property type="evidence" value="ECO:0007669"/>
    <property type="project" value="UniProtKB-KW"/>
</dbReference>
<dbReference type="GO" id="GO:0003879">
    <property type="term" value="F:ATP phosphoribosyltransferase activity"/>
    <property type="evidence" value="ECO:0007669"/>
    <property type="project" value="UniProtKB-UniRule"/>
</dbReference>
<dbReference type="GO" id="GO:0000287">
    <property type="term" value="F:magnesium ion binding"/>
    <property type="evidence" value="ECO:0007669"/>
    <property type="project" value="UniProtKB-UniRule"/>
</dbReference>
<dbReference type="GO" id="GO:0000105">
    <property type="term" value="P:L-histidine biosynthetic process"/>
    <property type="evidence" value="ECO:0007669"/>
    <property type="project" value="UniProtKB-UniRule"/>
</dbReference>
<dbReference type="CDD" id="cd13593">
    <property type="entry name" value="PBP2_HisGL3"/>
    <property type="match status" value="1"/>
</dbReference>
<dbReference type="Gene3D" id="3.40.190.10">
    <property type="entry name" value="Periplasmic binding protein-like II"/>
    <property type="match status" value="2"/>
</dbReference>
<dbReference type="HAMAP" id="MF_00079">
    <property type="entry name" value="HisG_Long"/>
    <property type="match status" value="1"/>
</dbReference>
<dbReference type="InterPro" id="IPR020621">
    <property type="entry name" value="ATP-PRT_HisG_long"/>
</dbReference>
<dbReference type="InterPro" id="IPR013820">
    <property type="entry name" value="ATP_PRibTrfase_cat"/>
</dbReference>
<dbReference type="InterPro" id="IPR018198">
    <property type="entry name" value="ATP_PRibTrfase_CS"/>
</dbReference>
<dbReference type="InterPro" id="IPR001348">
    <property type="entry name" value="ATP_PRibTrfase_HisG"/>
</dbReference>
<dbReference type="NCBIfam" id="TIGR00070">
    <property type="entry name" value="hisG"/>
    <property type="match status" value="1"/>
</dbReference>
<dbReference type="PANTHER" id="PTHR21403:SF8">
    <property type="entry name" value="ATP PHOSPHORIBOSYLTRANSFERASE"/>
    <property type="match status" value="1"/>
</dbReference>
<dbReference type="PANTHER" id="PTHR21403">
    <property type="entry name" value="ATP PHOSPHORIBOSYLTRANSFERASE ATP-PRTASE"/>
    <property type="match status" value="1"/>
</dbReference>
<dbReference type="Pfam" id="PF01634">
    <property type="entry name" value="HisG"/>
    <property type="match status" value="1"/>
</dbReference>
<dbReference type="SUPFAM" id="SSF53850">
    <property type="entry name" value="Periplasmic binding protein-like II"/>
    <property type="match status" value="1"/>
</dbReference>
<dbReference type="PROSITE" id="PS01316">
    <property type="entry name" value="ATP_P_PHORIBOSYLTR"/>
    <property type="match status" value="1"/>
</dbReference>
<protein>
    <recommendedName>
        <fullName evidence="1">ATP phosphoribosyltransferase</fullName>
        <shortName evidence="1">ATP-PRT</shortName>
        <shortName evidence="1">ATP-PRTase</shortName>
        <ecNumber evidence="1">2.4.2.17</ecNumber>
    </recommendedName>
</protein>
<gene>
    <name evidence="1" type="primary">hisG</name>
    <name type="ordered locus">RPB_1845</name>
</gene>